<keyword id="KW-0004">4Fe-4S</keyword>
<keyword id="KW-0963">Cytoplasm</keyword>
<keyword id="KW-0408">Iron</keyword>
<keyword id="KW-0411">Iron-sulfur</keyword>
<keyword id="KW-0479">Metal-binding</keyword>
<keyword id="KW-1185">Reference proteome</keyword>
<keyword id="KW-0949">S-adenosyl-L-methionine</keyword>
<keyword id="KW-0808">Transferase</keyword>
<comment type="function">
    <text evidence="1">Catalyzes the radical-mediated insertion of two sulfur atoms into the C-6 and C-8 positions of the octanoyl moiety bound to the lipoyl domains of lipoate-dependent enzymes, thereby converting the octanoylated domains into lipoylated derivatives.</text>
</comment>
<comment type="catalytic activity">
    <reaction evidence="1">
        <text>[[Fe-S] cluster scaffold protein carrying a second [4Fe-4S](2+) cluster] + N(6)-octanoyl-L-lysyl-[protein] + 2 oxidized [2Fe-2S]-[ferredoxin] + 2 S-adenosyl-L-methionine + 4 H(+) = [[Fe-S] cluster scaffold protein] + N(6)-[(R)-dihydrolipoyl]-L-lysyl-[protein] + 4 Fe(3+) + 2 hydrogen sulfide + 2 5'-deoxyadenosine + 2 L-methionine + 2 reduced [2Fe-2S]-[ferredoxin]</text>
        <dbReference type="Rhea" id="RHEA:16585"/>
        <dbReference type="Rhea" id="RHEA-COMP:9928"/>
        <dbReference type="Rhea" id="RHEA-COMP:10000"/>
        <dbReference type="Rhea" id="RHEA-COMP:10001"/>
        <dbReference type="Rhea" id="RHEA-COMP:10475"/>
        <dbReference type="Rhea" id="RHEA-COMP:14568"/>
        <dbReference type="Rhea" id="RHEA-COMP:14569"/>
        <dbReference type="ChEBI" id="CHEBI:15378"/>
        <dbReference type="ChEBI" id="CHEBI:17319"/>
        <dbReference type="ChEBI" id="CHEBI:29034"/>
        <dbReference type="ChEBI" id="CHEBI:29919"/>
        <dbReference type="ChEBI" id="CHEBI:33722"/>
        <dbReference type="ChEBI" id="CHEBI:33737"/>
        <dbReference type="ChEBI" id="CHEBI:33738"/>
        <dbReference type="ChEBI" id="CHEBI:57844"/>
        <dbReference type="ChEBI" id="CHEBI:59789"/>
        <dbReference type="ChEBI" id="CHEBI:78809"/>
        <dbReference type="ChEBI" id="CHEBI:83100"/>
        <dbReference type="EC" id="2.8.1.8"/>
    </reaction>
</comment>
<comment type="cofactor">
    <cofactor evidence="1">
        <name>[4Fe-4S] cluster</name>
        <dbReference type="ChEBI" id="CHEBI:49883"/>
    </cofactor>
    <text evidence="1">Binds 2 [4Fe-4S] clusters per subunit. One cluster is coordinated with 3 cysteines and an exchangeable S-adenosyl-L-methionine.</text>
</comment>
<comment type="pathway">
    <text evidence="1">Protein modification; protein lipoylation via endogenous pathway; protein N(6)-(lipoyl)lysine from octanoyl-[acyl-carrier-protein]: step 2/2.</text>
</comment>
<comment type="subcellular location">
    <subcellularLocation>
        <location evidence="1">Cytoplasm</location>
    </subcellularLocation>
</comment>
<comment type="similarity">
    <text evidence="1">Belongs to the radical SAM superfamily. Lipoyl synthase family.</text>
</comment>
<accession>Q9KTF9</accession>
<evidence type="ECO:0000255" key="1">
    <source>
        <dbReference type="HAMAP-Rule" id="MF_00206"/>
    </source>
</evidence>
<evidence type="ECO:0000255" key="2">
    <source>
        <dbReference type="PROSITE-ProRule" id="PRU01266"/>
    </source>
</evidence>
<dbReference type="EC" id="2.8.1.8" evidence="1"/>
<dbReference type="EMBL" id="AE003852">
    <property type="protein sequence ID" value="AAF94105.1"/>
    <property type="molecule type" value="Genomic_DNA"/>
</dbReference>
<dbReference type="PIR" id="B82259">
    <property type="entry name" value="B82259"/>
</dbReference>
<dbReference type="RefSeq" id="NP_230590.1">
    <property type="nucleotide sequence ID" value="NC_002505.1"/>
</dbReference>
<dbReference type="RefSeq" id="WP_000042591.1">
    <property type="nucleotide sequence ID" value="NZ_LT906614.1"/>
</dbReference>
<dbReference type="SMR" id="Q9KTF9"/>
<dbReference type="STRING" id="243277.VC_0943"/>
<dbReference type="DNASU" id="2614163"/>
<dbReference type="EnsemblBacteria" id="AAF94105">
    <property type="protein sequence ID" value="AAF94105"/>
    <property type="gene ID" value="VC_0943"/>
</dbReference>
<dbReference type="KEGG" id="vch:VC_0943"/>
<dbReference type="PATRIC" id="fig|243277.26.peg.899"/>
<dbReference type="eggNOG" id="COG0320">
    <property type="taxonomic scope" value="Bacteria"/>
</dbReference>
<dbReference type="HOGENOM" id="CLU_033144_2_1_6"/>
<dbReference type="UniPathway" id="UPA00538">
    <property type="reaction ID" value="UER00593"/>
</dbReference>
<dbReference type="Proteomes" id="UP000000584">
    <property type="component" value="Chromosome 1"/>
</dbReference>
<dbReference type="GO" id="GO:0005737">
    <property type="term" value="C:cytoplasm"/>
    <property type="evidence" value="ECO:0007669"/>
    <property type="project" value="UniProtKB-SubCell"/>
</dbReference>
<dbReference type="GO" id="GO:0051539">
    <property type="term" value="F:4 iron, 4 sulfur cluster binding"/>
    <property type="evidence" value="ECO:0007669"/>
    <property type="project" value="UniProtKB-UniRule"/>
</dbReference>
<dbReference type="GO" id="GO:0016992">
    <property type="term" value="F:lipoate synthase activity"/>
    <property type="evidence" value="ECO:0007669"/>
    <property type="project" value="UniProtKB-UniRule"/>
</dbReference>
<dbReference type="GO" id="GO:0046872">
    <property type="term" value="F:metal ion binding"/>
    <property type="evidence" value="ECO:0007669"/>
    <property type="project" value="UniProtKB-KW"/>
</dbReference>
<dbReference type="CDD" id="cd01335">
    <property type="entry name" value="Radical_SAM"/>
    <property type="match status" value="1"/>
</dbReference>
<dbReference type="FunFam" id="3.20.20.70:FF:000023">
    <property type="entry name" value="Lipoyl synthase"/>
    <property type="match status" value="1"/>
</dbReference>
<dbReference type="Gene3D" id="3.20.20.70">
    <property type="entry name" value="Aldolase class I"/>
    <property type="match status" value="1"/>
</dbReference>
<dbReference type="HAMAP" id="MF_00206">
    <property type="entry name" value="Lipoyl_synth"/>
    <property type="match status" value="1"/>
</dbReference>
<dbReference type="InterPro" id="IPR013785">
    <property type="entry name" value="Aldolase_TIM"/>
</dbReference>
<dbReference type="InterPro" id="IPR006638">
    <property type="entry name" value="Elp3/MiaA/NifB-like_rSAM"/>
</dbReference>
<dbReference type="InterPro" id="IPR031691">
    <property type="entry name" value="LIAS_N"/>
</dbReference>
<dbReference type="InterPro" id="IPR003698">
    <property type="entry name" value="Lipoyl_synth"/>
</dbReference>
<dbReference type="InterPro" id="IPR007197">
    <property type="entry name" value="rSAM"/>
</dbReference>
<dbReference type="NCBIfam" id="TIGR00510">
    <property type="entry name" value="lipA"/>
    <property type="match status" value="1"/>
</dbReference>
<dbReference type="NCBIfam" id="NF004019">
    <property type="entry name" value="PRK05481.1"/>
    <property type="match status" value="1"/>
</dbReference>
<dbReference type="NCBIfam" id="NF009544">
    <property type="entry name" value="PRK12928.1"/>
    <property type="match status" value="1"/>
</dbReference>
<dbReference type="PANTHER" id="PTHR10949">
    <property type="entry name" value="LIPOYL SYNTHASE"/>
    <property type="match status" value="1"/>
</dbReference>
<dbReference type="PANTHER" id="PTHR10949:SF0">
    <property type="entry name" value="LIPOYL SYNTHASE, MITOCHONDRIAL"/>
    <property type="match status" value="1"/>
</dbReference>
<dbReference type="Pfam" id="PF16881">
    <property type="entry name" value="LIAS_N"/>
    <property type="match status" value="1"/>
</dbReference>
<dbReference type="Pfam" id="PF04055">
    <property type="entry name" value="Radical_SAM"/>
    <property type="match status" value="1"/>
</dbReference>
<dbReference type="PIRSF" id="PIRSF005963">
    <property type="entry name" value="Lipoyl_synth"/>
    <property type="match status" value="1"/>
</dbReference>
<dbReference type="SFLD" id="SFLDF00271">
    <property type="entry name" value="lipoyl_synthase"/>
    <property type="match status" value="1"/>
</dbReference>
<dbReference type="SFLD" id="SFLDS00029">
    <property type="entry name" value="Radical_SAM"/>
    <property type="match status" value="1"/>
</dbReference>
<dbReference type="SMART" id="SM00729">
    <property type="entry name" value="Elp3"/>
    <property type="match status" value="1"/>
</dbReference>
<dbReference type="SUPFAM" id="SSF102114">
    <property type="entry name" value="Radical SAM enzymes"/>
    <property type="match status" value="1"/>
</dbReference>
<dbReference type="PROSITE" id="PS51918">
    <property type="entry name" value="RADICAL_SAM"/>
    <property type="match status" value="1"/>
</dbReference>
<name>LIPA_VIBCH</name>
<feature type="chain" id="PRO_0000102377" description="Lipoyl synthase">
    <location>
        <begin position="1"/>
        <end position="321"/>
    </location>
</feature>
<feature type="domain" description="Radical SAM core" evidence="2">
    <location>
        <begin position="80"/>
        <end position="297"/>
    </location>
</feature>
<feature type="binding site" evidence="1">
    <location>
        <position position="68"/>
    </location>
    <ligand>
        <name>[4Fe-4S] cluster</name>
        <dbReference type="ChEBI" id="CHEBI:49883"/>
        <label>1</label>
    </ligand>
</feature>
<feature type="binding site" evidence="1">
    <location>
        <position position="73"/>
    </location>
    <ligand>
        <name>[4Fe-4S] cluster</name>
        <dbReference type="ChEBI" id="CHEBI:49883"/>
        <label>1</label>
    </ligand>
</feature>
<feature type="binding site" evidence="1">
    <location>
        <position position="79"/>
    </location>
    <ligand>
        <name>[4Fe-4S] cluster</name>
        <dbReference type="ChEBI" id="CHEBI:49883"/>
        <label>1</label>
    </ligand>
</feature>
<feature type="binding site" evidence="1">
    <location>
        <position position="94"/>
    </location>
    <ligand>
        <name>[4Fe-4S] cluster</name>
        <dbReference type="ChEBI" id="CHEBI:49883"/>
        <label>2</label>
        <note>4Fe-4S-S-AdoMet</note>
    </ligand>
</feature>
<feature type="binding site" evidence="1">
    <location>
        <position position="98"/>
    </location>
    <ligand>
        <name>[4Fe-4S] cluster</name>
        <dbReference type="ChEBI" id="CHEBI:49883"/>
        <label>2</label>
        <note>4Fe-4S-S-AdoMet</note>
    </ligand>
</feature>
<feature type="binding site" evidence="1">
    <location>
        <position position="101"/>
    </location>
    <ligand>
        <name>[4Fe-4S] cluster</name>
        <dbReference type="ChEBI" id="CHEBI:49883"/>
        <label>2</label>
        <note>4Fe-4S-S-AdoMet</note>
    </ligand>
</feature>
<feature type="binding site" evidence="1">
    <location>
        <position position="308"/>
    </location>
    <ligand>
        <name>[4Fe-4S] cluster</name>
        <dbReference type="ChEBI" id="CHEBI:49883"/>
        <label>1</label>
    </ligand>
</feature>
<gene>
    <name evidence="1" type="primary">lipA</name>
    <name type="ordered locus">VC_0943</name>
</gene>
<reference key="1">
    <citation type="journal article" date="2000" name="Nature">
        <title>DNA sequence of both chromosomes of the cholera pathogen Vibrio cholerae.</title>
        <authorList>
            <person name="Heidelberg J.F."/>
            <person name="Eisen J.A."/>
            <person name="Nelson W.C."/>
            <person name="Clayton R.A."/>
            <person name="Gwinn M.L."/>
            <person name="Dodson R.J."/>
            <person name="Haft D.H."/>
            <person name="Hickey E.K."/>
            <person name="Peterson J.D."/>
            <person name="Umayam L.A."/>
            <person name="Gill S.R."/>
            <person name="Nelson K.E."/>
            <person name="Read T.D."/>
            <person name="Tettelin H."/>
            <person name="Richardson D.L."/>
            <person name="Ermolaeva M.D."/>
            <person name="Vamathevan J.J."/>
            <person name="Bass S."/>
            <person name="Qin H."/>
            <person name="Dragoi I."/>
            <person name="Sellers P."/>
            <person name="McDonald L.A."/>
            <person name="Utterback T.R."/>
            <person name="Fleischmann R.D."/>
            <person name="Nierman W.C."/>
            <person name="White O."/>
            <person name="Salzberg S.L."/>
            <person name="Smith H.O."/>
            <person name="Colwell R.R."/>
            <person name="Mekalanos J.J."/>
            <person name="Venter J.C."/>
            <person name="Fraser C.M."/>
        </authorList>
    </citation>
    <scope>NUCLEOTIDE SEQUENCE [LARGE SCALE GENOMIC DNA]</scope>
    <source>
        <strain>ATCC 39315 / El Tor Inaba N16961</strain>
    </source>
</reference>
<protein>
    <recommendedName>
        <fullName evidence="1">Lipoyl synthase</fullName>
        <ecNumber evidence="1">2.8.1.8</ecNumber>
    </recommendedName>
    <alternativeName>
        <fullName evidence="1">Lip-syn</fullName>
        <shortName evidence="1">LS</shortName>
    </alternativeName>
    <alternativeName>
        <fullName evidence="1">Lipoate synthase</fullName>
    </alternativeName>
    <alternativeName>
        <fullName evidence="1">Lipoic acid synthase</fullName>
    </alternativeName>
    <alternativeName>
        <fullName evidence="1">Sulfur insertion protein LipA</fullName>
    </alternativeName>
</protein>
<sequence length="321" mass="36454">MSKPIQMERGVKYRDADKMALIPIKNMPTEQKEVLRKPEWMKIKLPADSQRIQDIKAAMRKNNLHSVCEEASCPNLAECFNHGTATFMILGAICTRRCPFCDVAHGRPNAPEAEEPKKLAQTIHDMKLKYVVITSVDRDDLRDGGAQHFADCNREIRALNPHIKIETLVPDFRGRMEVALEALKDNPPDVFNHNLETAPRLYRKVRPGANYKWSLELLRQFKEQHPHVPTKSGLMMGLGETKEEIVEVLKDLRAHGVTMLTLGQYLAPSRHHLPVERYVPPAEFDELKEVALELGFTHAACGPFVRSSYHADLQAKGLEVK</sequence>
<organism>
    <name type="scientific">Vibrio cholerae serotype O1 (strain ATCC 39315 / El Tor Inaba N16961)</name>
    <dbReference type="NCBI Taxonomy" id="243277"/>
    <lineage>
        <taxon>Bacteria</taxon>
        <taxon>Pseudomonadati</taxon>
        <taxon>Pseudomonadota</taxon>
        <taxon>Gammaproteobacteria</taxon>
        <taxon>Vibrionales</taxon>
        <taxon>Vibrionaceae</taxon>
        <taxon>Vibrio</taxon>
    </lineage>
</organism>
<proteinExistence type="inferred from homology"/>